<comment type="function">
    <text evidence="1">Catalyzes the formation of methylglyoxal from dihydroxyacetone phosphate.</text>
</comment>
<comment type="catalytic activity">
    <reaction evidence="1">
        <text>dihydroxyacetone phosphate = methylglyoxal + phosphate</text>
        <dbReference type="Rhea" id="RHEA:17937"/>
        <dbReference type="ChEBI" id="CHEBI:17158"/>
        <dbReference type="ChEBI" id="CHEBI:43474"/>
        <dbReference type="ChEBI" id="CHEBI:57642"/>
        <dbReference type="EC" id="4.2.3.3"/>
    </reaction>
</comment>
<comment type="similarity">
    <text evidence="1">Belongs to the methylglyoxal synthase family.</text>
</comment>
<protein>
    <recommendedName>
        <fullName evidence="1">Methylglyoxal synthase</fullName>
        <shortName evidence="1">MGS</shortName>
        <ecNumber evidence="1">4.2.3.3</ecNumber>
    </recommendedName>
</protein>
<keyword id="KW-0456">Lyase</keyword>
<keyword id="KW-1185">Reference proteome</keyword>
<sequence>MELTTRTIAARKHIALVSHDHCKKSLLAWVMENRDLLAQHELYATGTTGNLVQKATGIDVHCLLSGPMGGDQEVGALISEKKIDILIFFWDPLNAVPHDPDVKALLRLATVWNIPVATNRSTADFLIGSTLFSSEVTIAIPDYDRYMQQRLDLK</sequence>
<reference key="1">
    <citation type="journal article" date="2001" name="Nature">
        <title>Genome sequence of Yersinia pestis, the causative agent of plague.</title>
        <authorList>
            <person name="Parkhill J."/>
            <person name="Wren B.W."/>
            <person name="Thomson N.R."/>
            <person name="Titball R.W."/>
            <person name="Holden M.T.G."/>
            <person name="Prentice M.B."/>
            <person name="Sebaihia M."/>
            <person name="James K.D."/>
            <person name="Churcher C.M."/>
            <person name="Mungall K.L."/>
            <person name="Baker S."/>
            <person name="Basham D."/>
            <person name="Bentley S.D."/>
            <person name="Brooks K."/>
            <person name="Cerdeno-Tarraga A.-M."/>
            <person name="Chillingworth T."/>
            <person name="Cronin A."/>
            <person name="Davies R.M."/>
            <person name="Davis P."/>
            <person name="Dougan G."/>
            <person name="Feltwell T."/>
            <person name="Hamlin N."/>
            <person name="Holroyd S."/>
            <person name="Jagels K."/>
            <person name="Karlyshev A.V."/>
            <person name="Leather S."/>
            <person name="Moule S."/>
            <person name="Oyston P.C.F."/>
            <person name="Quail M.A."/>
            <person name="Rutherford K.M."/>
            <person name="Simmonds M."/>
            <person name="Skelton J."/>
            <person name="Stevens K."/>
            <person name="Whitehead S."/>
            <person name="Barrell B.G."/>
        </authorList>
    </citation>
    <scope>NUCLEOTIDE SEQUENCE [LARGE SCALE GENOMIC DNA]</scope>
    <source>
        <strain>CO-92 / Biovar Orientalis</strain>
    </source>
</reference>
<reference key="2">
    <citation type="journal article" date="2002" name="J. Bacteriol.">
        <title>Genome sequence of Yersinia pestis KIM.</title>
        <authorList>
            <person name="Deng W."/>
            <person name="Burland V."/>
            <person name="Plunkett G. III"/>
            <person name="Boutin A."/>
            <person name="Mayhew G.F."/>
            <person name="Liss P."/>
            <person name="Perna N.T."/>
            <person name="Rose D.J."/>
            <person name="Mau B."/>
            <person name="Zhou S."/>
            <person name="Schwartz D.C."/>
            <person name="Fetherston J.D."/>
            <person name="Lindler L.E."/>
            <person name="Brubaker R.R."/>
            <person name="Plano G.V."/>
            <person name="Straley S.C."/>
            <person name="McDonough K.A."/>
            <person name="Nilles M.L."/>
            <person name="Matson J.S."/>
            <person name="Blattner F.R."/>
            <person name="Perry R.D."/>
        </authorList>
    </citation>
    <scope>NUCLEOTIDE SEQUENCE [LARGE SCALE GENOMIC DNA]</scope>
    <source>
        <strain>KIM10+ / Biovar Mediaevalis</strain>
    </source>
</reference>
<reference key="3">
    <citation type="journal article" date="2004" name="DNA Res.">
        <title>Complete genome sequence of Yersinia pestis strain 91001, an isolate avirulent to humans.</title>
        <authorList>
            <person name="Song Y."/>
            <person name="Tong Z."/>
            <person name="Wang J."/>
            <person name="Wang L."/>
            <person name="Guo Z."/>
            <person name="Han Y."/>
            <person name="Zhang J."/>
            <person name="Pei D."/>
            <person name="Zhou D."/>
            <person name="Qin H."/>
            <person name="Pang X."/>
            <person name="Han Y."/>
            <person name="Zhai J."/>
            <person name="Li M."/>
            <person name="Cui B."/>
            <person name="Qi Z."/>
            <person name="Jin L."/>
            <person name="Dai R."/>
            <person name="Chen F."/>
            <person name="Li S."/>
            <person name="Ye C."/>
            <person name="Du Z."/>
            <person name="Lin W."/>
            <person name="Wang J."/>
            <person name="Yu J."/>
            <person name="Yang H."/>
            <person name="Wang J."/>
            <person name="Huang P."/>
            <person name="Yang R."/>
        </authorList>
    </citation>
    <scope>NUCLEOTIDE SEQUENCE [LARGE SCALE GENOMIC DNA]</scope>
    <source>
        <strain>91001 / Biovar Mediaevalis</strain>
    </source>
</reference>
<feature type="chain" id="PRO_0000178656" description="Methylglyoxal synthase">
    <location>
        <begin position="1"/>
        <end position="154"/>
    </location>
</feature>
<feature type="domain" description="MGS-like" evidence="1">
    <location>
        <begin position="1"/>
        <end position="154"/>
    </location>
</feature>
<feature type="active site" description="Proton donor/acceptor" evidence="1">
    <location>
        <position position="71"/>
    </location>
</feature>
<feature type="binding site" evidence="1">
    <location>
        <position position="19"/>
    </location>
    <ligand>
        <name>substrate</name>
    </ligand>
</feature>
<feature type="binding site" evidence="1">
    <location>
        <position position="23"/>
    </location>
    <ligand>
        <name>substrate</name>
    </ligand>
</feature>
<feature type="binding site" evidence="1">
    <location>
        <begin position="45"/>
        <end position="48"/>
    </location>
    <ligand>
        <name>substrate</name>
    </ligand>
</feature>
<feature type="binding site" evidence="1">
    <location>
        <begin position="65"/>
        <end position="66"/>
    </location>
    <ligand>
        <name>substrate</name>
    </ligand>
</feature>
<feature type="binding site" evidence="1">
    <location>
        <position position="98"/>
    </location>
    <ligand>
        <name>substrate</name>
    </ligand>
</feature>
<accession>Q8ZG71</accession>
<accession>Q0WGX6</accession>
<dbReference type="EC" id="4.2.3.3" evidence="1"/>
<dbReference type="EMBL" id="AL590842">
    <property type="protein sequence ID" value="CAL20092.1"/>
    <property type="molecule type" value="Genomic_DNA"/>
</dbReference>
<dbReference type="EMBL" id="AE009952">
    <property type="protein sequence ID" value="AAM86281.1"/>
    <property type="molecule type" value="Genomic_DNA"/>
</dbReference>
<dbReference type="EMBL" id="AE017042">
    <property type="protein sequence ID" value="AAS61575.1"/>
    <property type="molecule type" value="Genomic_DNA"/>
</dbReference>
<dbReference type="PIR" id="AB0176">
    <property type="entry name" value="AB0176"/>
</dbReference>
<dbReference type="RefSeq" id="WP_002213060.1">
    <property type="nucleotide sequence ID" value="NZ_WUCM01000066.1"/>
</dbReference>
<dbReference type="RefSeq" id="YP_002346462.1">
    <property type="nucleotide sequence ID" value="NC_003143.1"/>
</dbReference>
<dbReference type="SMR" id="Q8ZG71"/>
<dbReference type="STRING" id="214092.YPO1441"/>
<dbReference type="PaxDb" id="214092-YPO1441"/>
<dbReference type="DNASU" id="1147676"/>
<dbReference type="EnsemblBacteria" id="AAS61575">
    <property type="protein sequence ID" value="AAS61575"/>
    <property type="gene ID" value="YP_1332"/>
</dbReference>
<dbReference type="KEGG" id="ype:YPO1441"/>
<dbReference type="KEGG" id="ypk:y2729"/>
<dbReference type="KEGG" id="ypm:YP_1332"/>
<dbReference type="PATRIC" id="fig|214092.21.peg.1767"/>
<dbReference type="eggNOG" id="COG1803">
    <property type="taxonomic scope" value="Bacteria"/>
</dbReference>
<dbReference type="HOGENOM" id="CLU_120420_0_1_6"/>
<dbReference type="OMA" id="RICDVHN"/>
<dbReference type="OrthoDB" id="9787147at2"/>
<dbReference type="Proteomes" id="UP000000815">
    <property type="component" value="Chromosome"/>
</dbReference>
<dbReference type="Proteomes" id="UP000001019">
    <property type="component" value="Chromosome"/>
</dbReference>
<dbReference type="Proteomes" id="UP000002490">
    <property type="component" value="Chromosome"/>
</dbReference>
<dbReference type="GO" id="GO:0005829">
    <property type="term" value="C:cytosol"/>
    <property type="evidence" value="ECO:0000318"/>
    <property type="project" value="GO_Central"/>
</dbReference>
<dbReference type="GO" id="GO:0008929">
    <property type="term" value="F:methylglyoxal synthase activity"/>
    <property type="evidence" value="ECO:0000318"/>
    <property type="project" value="GO_Central"/>
</dbReference>
<dbReference type="GO" id="GO:0019242">
    <property type="term" value="P:methylglyoxal biosynthetic process"/>
    <property type="evidence" value="ECO:0000318"/>
    <property type="project" value="GO_Central"/>
</dbReference>
<dbReference type="CDD" id="cd01422">
    <property type="entry name" value="MGS"/>
    <property type="match status" value="1"/>
</dbReference>
<dbReference type="FunFam" id="3.40.50.1380:FF:000002">
    <property type="entry name" value="Methylglyoxal synthase"/>
    <property type="match status" value="1"/>
</dbReference>
<dbReference type="Gene3D" id="3.40.50.1380">
    <property type="entry name" value="Methylglyoxal synthase-like domain"/>
    <property type="match status" value="1"/>
</dbReference>
<dbReference type="HAMAP" id="MF_00549">
    <property type="entry name" value="Methylglyoxal_synth"/>
    <property type="match status" value="1"/>
</dbReference>
<dbReference type="InterPro" id="IPR004363">
    <property type="entry name" value="Methylgl_synth"/>
</dbReference>
<dbReference type="InterPro" id="IPR018148">
    <property type="entry name" value="Methylglyoxal_synth_AS"/>
</dbReference>
<dbReference type="InterPro" id="IPR011607">
    <property type="entry name" value="MGS-like_dom"/>
</dbReference>
<dbReference type="InterPro" id="IPR036914">
    <property type="entry name" value="MGS-like_dom_sf"/>
</dbReference>
<dbReference type="NCBIfam" id="TIGR00160">
    <property type="entry name" value="MGSA"/>
    <property type="match status" value="1"/>
</dbReference>
<dbReference type="NCBIfam" id="NF003559">
    <property type="entry name" value="PRK05234.1"/>
    <property type="match status" value="1"/>
</dbReference>
<dbReference type="PANTHER" id="PTHR30492">
    <property type="entry name" value="METHYLGLYOXAL SYNTHASE"/>
    <property type="match status" value="1"/>
</dbReference>
<dbReference type="PANTHER" id="PTHR30492:SF0">
    <property type="entry name" value="METHYLGLYOXAL SYNTHASE"/>
    <property type="match status" value="1"/>
</dbReference>
<dbReference type="Pfam" id="PF02142">
    <property type="entry name" value="MGS"/>
    <property type="match status" value="1"/>
</dbReference>
<dbReference type="PIRSF" id="PIRSF006614">
    <property type="entry name" value="Methylglyox_syn"/>
    <property type="match status" value="1"/>
</dbReference>
<dbReference type="SMART" id="SM00851">
    <property type="entry name" value="MGS"/>
    <property type="match status" value="1"/>
</dbReference>
<dbReference type="SUPFAM" id="SSF52335">
    <property type="entry name" value="Methylglyoxal synthase-like"/>
    <property type="match status" value="1"/>
</dbReference>
<dbReference type="PROSITE" id="PS01335">
    <property type="entry name" value="METHYLGLYOXAL_SYNTH"/>
    <property type="match status" value="1"/>
</dbReference>
<dbReference type="PROSITE" id="PS51855">
    <property type="entry name" value="MGS"/>
    <property type="match status" value="1"/>
</dbReference>
<evidence type="ECO:0000255" key="1">
    <source>
        <dbReference type="HAMAP-Rule" id="MF_00549"/>
    </source>
</evidence>
<gene>
    <name evidence="1" type="primary">mgsA</name>
    <name type="ordered locus">YPO1441</name>
    <name type="ordered locus">y2729</name>
    <name type="ordered locus">YP_1332</name>
</gene>
<organism>
    <name type="scientific">Yersinia pestis</name>
    <dbReference type="NCBI Taxonomy" id="632"/>
    <lineage>
        <taxon>Bacteria</taxon>
        <taxon>Pseudomonadati</taxon>
        <taxon>Pseudomonadota</taxon>
        <taxon>Gammaproteobacteria</taxon>
        <taxon>Enterobacterales</taxon>
        <taxon>Yersiniaceae</taxon>
        <taxon>Yersinia</taxon>
    </lineage>
</organism>
<name>MGSA_YERPE</name>
<proteinExistence type="inferred from homology"/>